<feature type="chain" id="PRO_0000392381" description="Fe-S cluster assembly protein DRE2">
    <location>
        <begin position="1"/>
        <end position="409"/>
    </location>
</feature>
<feature type="region of interest" description="N-terminal SAM-like domain" evidence="1">
    <location>
        <begin position="1"/>
        <end position="153"/>
    </location>
</feature>
<feature type="region of interest" description="Linker" evidence="1">
    <location>
        <begin position="154"/>
        <end position="262"/>
    </location>
</feature>
<feature type="region of interest" description="Disordered" evidence="2">
    <location>
        <begin position="195"/>
        <end position="215"/>
    </location>
</feature>
<feature type="region of interest" description="Fe-S binding site A" evidence="1">
    <location>
        <begin position="280"/>
        <end position="299"/>
    </location>
</feature>
<feature type="region of interest" description="Fe-S binding site B" evidence="1">
    <location>
        <begin position="372"/>
        <end position="386"/>
    </location>
</feature>
<feature type="short sequence motif" description="Cx2C motif 1" evidence="1">
    <location>
        <begin position="372"/>
        <end position="375"/>
    </location>
</feature>
<feature type="short sequence motif" description="Cx2C motif 2" evidence="1">
    <location>
        <begin position="383"/>
        <end position="386"/>
    </location>
</feature>
<feature type="compositionally biased region" description="Low complexity" evidence="2">
    <location>
        <begin position="201"/>
        <end position="212"/>
    </location>
</feature>
<feature type="binding site" evidence="1">
    <location>
        <position position="280"/>
    </location>
    <ligand>
        <name>[2Fe-2S] cluster</name>
        <dbReference type="ChEBI" id="CHEBI:190135"/>
    </ligand>
</feature>
<feature type="binding site" evidence="1">
    <location>
        <position position="294"/>
    </location>
    <ligand>
        <name>[2Fe-2S] cluster</name>
        <dbReference type="ChEBI" id="CHEBI:190135"/>
    </ligand>
</feature>
<feature type="binding site" evidence="1">
    <location>
        <position position="297"/>
    </location>
    <ligand>
        <name>[2Fe-2S] cluster</name>
        <dbReference type="ChEBI" id="CHEBI:190135"/>
    </ligand>
</feature>
<feature type="binding site" evidence="1">
    <location>
        <position position="299"/>
    </location>
    <ligand>
        <name>[2Fe-2S] cluster</name>
        <dbReference type="ChEBI" id="CHEBI:190135"/>
    </ligand>
</feature>
<feature type="binding site" evidence="1">
    <location>
        <position position="372"/>
    </location>
    <ligand>
        <name>[4Fe-4S] cluster</name>
        <dbReference type="ChEBI" id="CHEBI:49883"/>
    </ligand>
</feature>
<feature type="binding site" evidence="1">
    <location>
        <position position="375"/>
    </location>
    <ligand>
        <name>[4Fe-4S] cluster</name>
        <dbReference type="ChEBI" id="CHEBI:49883"/>
    </ligand>
</feature>
<feature type="binding site" evidence="1">
    <location>
        <position position="383"/>
    </location>
    <ligand>
        <name>[4Fe-4S] cluster</name>
        <dbReference type="ChEBI" id="CHEBI:49883"/>
    </ligand>
</feature>
<feature type="binding site" evidence="1">
    <location>
        <position position="386"/>
    </location>
    <ligand>
        <name>[4Fe-4S] cluster</name>
        <dbReference type="ChEBI" id="CHEBI:49883"/>
    </ligand>
</feature>
<keyword id="KW-0001">2Fe-2S</keyword>
<keyword id="KW-0004">4Fe-4S</keyword>
<keyword id="KW-0963">Cytoplasm</keyword>
<keyword id="KW-0408">Iron</keyword>
<keyword id="KW-0411">Iron-sulfur</keyword>
<keyword id="KW-0479">Metal-binding</keyword>
<keyword id="KW-0496">Mitochondrion</keyword>
<keyword id="KW-1185">Reference proteome</keyword>
<organism>
    <name type="scientific">Candida albicans (strain SC5314 / ATCC MYA-2876)</name>
    <name type="common">Yeast</name>
    <dbReference type="NCBI Taxonomy" id="237561"/>
    <lineage>
        <taxon>Eukaryota</taxon>
        <taxon>Fungi</taxon>
        <taxon>Dikarya</taxon>
        <taxon>Ascomycota</taxon>
        <taxon>Saccharomycotina</taxon>
        <taxon>Pichiomycetes</taxon>
        <taxon>Debaryomycetaceae</taxon>
        <taxon>Candida/Lodderomyces clade</taxon>
        <taxon>Candida</taxon>
    </lineage>
</organism>
<accession>Q5A218</accession>
<accession>A0A1D8PS94</accession>
<accession>Q5A270</accession>
<proteinExistence type="inferred from homology"/>
<gene>
    <name evidence="1" type="primary">DRE2</name>
    <name type="ordered locus">CAALFM_CR02650CA</name>
    <name type="ORF">CaO19.10342</name>
    <name type="ORF">CaO19.2825</name>
</gene>
<reference key="1">
    <citation type="journal article" date="2004" name="Proc. Natl. Acad. Sci. U.S.A.">
        <title>The diploid genome sequence of Candida albicans.</title>
        <authorList>
            <person name="Jones T."/>
            <person name="Federspiel N.A."/>
            <person name="Chibana H."/>
            <person name="Dungan J."/>
            <person name="Kalman S."/>
            <person name="Magee B.B."/>
            <person name="Newport G."/>
            <person name="Thorstenson Y.R."/>
            <person name="Agabian N."/>
            <person name="Magee P.T."/>
            <person name="Davis R.W."/>
            <person name="Scherer S."/>
        </authorList>
    </citation>
    <scope>NUCLEOTIDE SEQUENCE [LARGE SCALE GENOMIC DNA]</scope>
    <source>
        <strain>SC5314 / ATCC MYA-2876</strain>
    </source>
</reference>
<reference key="2">
    <citation type="journal article" date="2007" name="Genome Biol.">
        <title>Assembly of the Candida albicans genome into sixteen supercontigs aligned on the eight chromosomes.</title>
        <authorList>
            <person name="van het Hoog M."/>
            <person name="Rast T.J."/>
            <person name="Martchenko M."/>
            <person name="Grindle S."/>
            <person name="Dignard D."/>
            <person name="Hogues H."/>
            <person name="Cuomo C."/>
            <person name="Berriman M."/>
            <person name="Scherer S."/>
            <person name="Magee B.B."/>
            <person name="Whiteway M."/>
            <person name="Chibana H."/>
            <person name="Nantel A."/>
            <person name="Magee P.T."/>
        </authorList>
    </citation>
    <scope>GENOME REANNOTATION</scope>
    <source>
        <strain>SC5314 / ATCC MYA-2876</strain>
    </source>
</reference>
<reference key="3">
    <citation type="journal article" date="2013" name="Genome Biol.">
        <title>Assembly of a phased diploid Candida albicans genome facilitates allele-specific measurements and provides a simple model for repeat and indel structure.</title>
        <authorList>
            <person name="Muzzey D."/>
            <person name="Schwartz K."/>
            <person name="Weissman J.S."/>
            <person name="Sherlock G."/>
        </authorList>
    </citation>
    <scope>NUCLEOTIDE SEQUENCE [LARGE SCALE GENOMIC DNA]</scope>
    <scope>GENOME REANNOTATION</scope>
    <source>
        <strain>SC5314 / ATCC MYA-2876</strain>
    </source>
</reference>
<protein>
    <recommendedName>
        <fullName evidence="1">Fe-S cluster assembly protein DRE2</fullName>
    </recommendedName>
    <alternativeName>
        <fullName evidence="1">Anamorsin homolog</fullName>
    </alternativeName>
</protein>
<evidence type="ECO:0000255" key="1">
    <source>
        <dbReference type="HAMAP-Rule" id="MF_03115"/>
    </source>
</evidence>
<evidence type="ECO:0000256" key="2">
    <source>
        <dbReference type="SAM" id="MobiDB-lite"/>
    </source>
</evidence>
<name>DRE2_CANAL</name>
<dbReference type="EMBL" id="CP017630">
    <property type="protein sequence ID" value="AOW31009.1"/>
    <property type="molecule type" value="Genomic_DNA"/>
</dbReference>
<dbReference type="RefSeq" id="XP_715756.1">
    <property type="nucleotide sequence ID" value="XM_710663.1"/>
</dbReference>
<dbReference type="SMR" id="Q5A218"/>
<dbReference type="FunCoup" id="Q5A218">
    <property type="interactions" value="177"/>
</dbReference>
<dbReference type="STRING" id="237561.Q5A218"/>
<dbReference type="EnsemblFungi" id="CR_02650C_A-T">
    <property type="protein sequence ID" value="CR_02650C_A-T-p1"/>
    <property type="gene ID" value="CR_02650C_A"/>
</dbReference>
<dbReference type="GeneID" id="3642571"/>
<dbReference type="KEGG" id="cal:CAALFM_CR02650CA"/>
<dbReference type="CGD" id="CAL0000199333">
    <property type="gene designation" value="DRE2"/>
</dbReference>
<dbReference type="VEuPathDB" id="FungiDB:CR_02650C_A"/>
<dbReference type="eggNOG" id="KOG4020">
    <property type="taxonomic scope" value="Eukaryota"/>
</dbReference>
<dbReference type="HOGENOM" id="CLU_121509_0_0_1"/>
<dbReference type="InParanoid" id="Q5A218"/>
<dbReference type="OrthoDB" id="311633at2759"/>
<dbReference type="PRO" id="PR:Q5A218"/>
<dbReference type="Proteomes" id="UP000000559">
    <property type="component" value="Chromosome R"/>
</dbReference>
<dbReference type="GO" id="GO:0005737">
    <property type="term" value="C:cytoplasm"/>
    <property type="evidence" value="ECO:0000318"/>
    <property type="project" value="GO_Central"/>
</dbReference>
<dbReference type="GO" id="GO:0005758">
    <property type="term" value="C:mitochondrial intermembrane space"/>
    <property type="evidence" value="ECO:0007669"/>
    <property type="project" value="UniProtKB-SubCell"/>
</dbReference>
<dbReference type="GO" id="GO:0051537">
    <property type="term" value="F:2 iron, 2 sulfur cluster binding"/>
    <property type="evidence" value="ECO:0007669"/>
    <property type="project" value="UniProtKB-UniRule"/>
</dbReference>
<dbReference type="GO" id="GO:0051539">
    <property type="term" value="F:4 iron, 4 sulfur cluster binding"/>
    <property type="evidence" value="ECO:0007669"/>
    <property type="project" value="UniProtKB-KW"/>
</dbReference>
<dbReference type="GO" id="GO:0009055">
    <property type="term" value="F:electron transfer activity"/>
    <property type="evidence" value="ECO:0007669"/>
    <property type="project" value="UniProtKB-UniRule"/>
</dbReference>
<dbReference type="GO" id="GO:0046872">
    <property type="term" value="F:metal ion binding"/>
    <property type="evidence" value="ECO:0007669"/>
    <property type="project" value="UniProtKB-KW"/>
</dbReference>
<dbReference type="GO" id="GO:0016226">
    <property type="term" value="P:iron-sulfur cluster assembly"/>
    <property type="evidence" value="ECO:0000318"/>
    <property type="project" value="GO_Central"/>
</dbReference>
<dbReference type="FunFam" id="3.40.50.11000:FF:000003">
    <property type="entry name" value="Fe-S cluster assembly protein DRE2"/>
    <property type="match status" value="1"/>
</dbReference>
<dbReference type="Gene3D" id="3.40.50.11000">
    <property type="entry name" value="Fe-S cluster assembly protein Dre2, N-terminal domain"/>
    <property type="match status" value="2"/>
</dbReference>
<dbReference type="HAMAP" id="MF_03115">
    <property type="entry name" value="Anamorsin"/>
    <property type="match status" value="1"/>
</dbReference>
<dbReference type="InterPro" id="IPR007785">
    <property type="entry name" value="Anamorsin"/>
</dbReference>
<dbReference type="InterPro" id="IPR046408">
    <property type="entry name" value="CIAPIN1"/>
</dbReference>
<dbReference type="InterPro" id="IPR031838">
    <property type="entry name" value="Dre2_N"/>
</dbReference>
<dbReference type="PANTHER" id="PTHR13273">
    <property type="entry name" value="ANAMORSIN"/>
    <property type="match status" value="1"/>
</dbReference>
<dbReference type="PANTHER" id="PTHR13273:SF14">
    <property type="entry name" value="ANAMORSIN"/>
    <property type="match status" value="1"/>
</dbReference>
<dbReference type="Pfam" id="PF05093">
    <property type="entry name" value="CIAPIN1"/>
    <property type="match status" value="1"/>
</dbReference>
<dbReference type="Pfam" id="PF16803">
    <property type="entry name" value="DRE2_N"/>
    <property type="match status" value="1"/>
</dbReference>
<comment type="function">
    <text evidence="1">Component of the cytosolic iron-sulfur (Fe-S) protein assembly (CIA) machinery required for the maturation of extramitochondrial Fe-S proteins. Part of an electron transfer chain functioning in an early step of cytosolic Fe-S biogenesis, facilitating the de novo assembly of a [4Fe-4S] cluster on the scaffold complex CFD1-NBP35. Electrons are transferred to DRE2 from NADPH via the FAD- and FMN-containing protein TAH18. TAH18-DRE2 are also required for the assembly of the diferric tyrosyl radical cofactor of ribonucleotide reductase (RNR), probably by providing electrons for reduction during radical cofactor maturation in the catalytic small subunit RNR2.</text>
</comment>
<comment type="cofactor">
    <cofactor evidence="1">
        <name>[2Fe-2S] cluster</name>
        <dbReference type="ChEBI" id="CHEBI:190135"/>
    </cofactor>
</comment>
<comment type="cofactor">
    <cofactor evidence="1">
        <name>[4Fe-4S] cluster</name>
        <dbReference type="ChEBI" id="CHEBI:49883"/>
    </cofactor>
</comment>
<comment type="subunit">
    <text evidence="1">Monomer. Interacts with TAH18. Interacts with MIA40.</text>
</comment>
<comment type="subcellular location">
    <subcellularLocation>
        <location evidence="1">Cytoplasm</location>
    </subcellularLocation>
    <subcellularLocation>
        <location evidence="1">Mitochondrion intermembrane space</location>
    </subcellularLocation>
</comment>
<comment type="domain">
    <text evidence="1">The C-terminal domain binds 2 Fe-S clusters but is otherwise mostly in an intrinsically disordered conformation.</text>
</comment>
<comment type="domain">
    <text evidence="1">The N-terminal domain has structural similarity with S-adenosyl-L-methionine-dependent methyltransferases, but does not bind S-adenosyl-L-methionine. It is required for correct assembly of the 2 Fe-S clusters.</text>
</comment>
<comment type="domain">
    <text evidence="1">The twin Cx2C motifs are involved in the recognition by the mitochondrial MIA40-ERV1 disulfide relay system. The formation of 2 disulfide bonds in the Cx2C motifs through dithiol/disulfide exchange reactions effectively traps the protein in the mitochondrial intermembrane space.</text>
</comment>
<comment type="similarity">
    <text evidence="1">Belongs to the anamorsin family.</text>
</comment>
<sequence length="409" mass="45941">MTSSINILLLLHPTVVTDAQLVEQIKSKIYQSHNNNNNNNGGTTTTTTGTVNINLNQQIIDRVTKGIIELPYDYYDEIIYINPNNESQYREIPISLMQLIYKLLKSNGKFKGDLPLDQNLDVLMTGFIIEEEEKEKEKEENNLEGELVNVWVKPIPVDEPVVTLLKKKTTTSNTTTIKKSLPLFKKLNKDEINNSDKDINNDNITNNNNNNNNKRKLVETKLTYFSSDDENSSDGSVLENDDIDDDDELIDENDLLNFNNNNNTNGGSLLSDKLITPRKCDISLNGGKKRKKACKDCTCGLKELEELEVSNQQNLQDQILGKLAQSATLEAIKIEERLKQQQQQQQQKVKVKFTEEDLSEIDFTVQGKTGGCGSCALGDAFRCDGCPYLGLPPFKPGEVVKLDGFGEDI</sequence>